<comment type="function">
    <text evidence="1">Channel that opens in response to stretch forces in the membrane lipid bilayer. May participate in the regulation of osmotic pressure changes within the cell.</text>
</comment>
<comment type="subunit">
    <text evidence="1">Homopentamer.</text>
</comment>
<comment type="subcellular location">
    <subcellularLocation>
        <location evidence="1">Cell inner membrane</location>
        <topology evidence="1">Multi-pass membrane protein</topology>
    </subcellularLocation>
</comment>
<comment type="similarity">
    <text evidence="1">Belongs to the MscL family.</text>
</comment>
<name>MSCL_RHIJ3</name>
<protein>
    <recommendedName>
        <fullName evidence="1">Large-conductance mechanosensitive channel</fullName>
    </recommendedName>
</protein>
<dbReference type="EMBL" id="AM236080">
    <property type="protein sequence ID" value="CAK06095.1"/>
    <property type="molecule type" value="Genomic_DNA"/>
</dbReference>
<dbReference type="RefSeq" id="WP_011650384.1">
    <property type="nucleotide sequence ID" value="NC_008380.1"/>
</dbReference>
<dbReference type="EnsemblBacteria" id="CAK06095">
    <property type="protein sequence ID" value="CAK06095"/>
    <property type="gene ID" value="RL0602"/>
</dbReference>
<dbReference type="KEGG" id="rle:RL0602"/>
<dbReference type="eggNOG" id="COG1970">
    <property type="taxonomic scope" value="Bacteria"/>
</dbReference>
<dbReference type="HOGENOM" id="CLU_095787_0_1_5"/>
<dbReference type="Proteomes" id="UP000006575">
    <property type="component" value="Chromosome"/>
</dbReference>
<dbReference type="GO" id="GO:0005886">
    <property type="term" value="C:plasma membrane"/>
    <property type="evidence" value="ECO:0007669"/>
    <property type="project" value="UniProtKB-SubCell"/>
</dbReference>
<dbReference type="GO" id="GO:0008381">
    <property type="term" value="F:mechanosensitive monoatomic ion channel activity"/>
    <property type="evidence" value="ECO:0007669"/>
    <property type="project" value="UniProtKB-UniRule"/>
</dbReference>
<dbReference type="Gene3D" id="1.10.1200.120">
    <property type="entry name" value="Large-conductance mechanosensitive channel, MscL, domain 1"/>
    <property type="match status" value="1"/>
</dbReference>
<dbReference type="HAMAP" id="MF_00115">
    <property type="entry name" value="MscL"/>
    <property type="match status" value="1"/>
</dbReference>
<dbReference type="InterPro" id="IPR019823">
    <property type="entry name" value="Mechanosensitive_channel_CS"/>
</dbReference>
<dbReference type="InterPro" id="IPR001185">
    <property type="entry name" value="MS_channel"/>
</dbReference>
<dbReference type="InterPro" id="IPR037673">
    <property type="entry name" value="MSC/AndL"/>
</dbReference>
<dbReference type="InterPro" id="IPR036019">
    <property type="entry name" value="MscL_channel"/>
</dbReference>
<dbReference type="NCBIfam" id="TIGR00220">
    <property type="entry name" value="mscL"/>
    <property type="match status" value="1"/>
</dbReference>
<dbReference type="NCBIfam" id="NF001843">
    <property type="entry name" value="PRK00567.1-4"/>
    <property type="match status" value="1"/>
</dbReference>
<dbReference type="NCBIfam" id="NF010557">
    <property type="entry name" value="PRK13952.1"/>
    <property type="match status" value="1"/>
</dbReference>
<dbReference type="PANTHER" id="PTHR30266:SF2">
    <property type="entry name" value="LARGE-CONDUCTANCE MECHANOSENSITIVE CHANNEL"/>
    <property type="match status" value="1"/>
</dbReference>
<dbReference type="PANTHER" id="PTHR30266">
    <property type="entry name" value="MECHANOSENSITIVE CHANNEL MSCL"/>
    <property type="match status" value="1"/>
</dbReference>
<dbReference type="Pfam" id="PF01741">
    <property type="entry name" value="MscL"/>
    <property type="match status" value="1"/>
</dbReference>
<dbReference type="PRINTS" id="PR01264">
    <property type="entry name" value="MECHCHANNEL"/>
</dbReference>
<dbReference type="SUPFAM" id="SSF81330">
    <property type="entry name" value="Gated mechanosensitive channel"/>
    <property type="match status" value="1"/>
</dbReference>
<dbReference type="PROSITE" id="PS01327">
    <property type="entry name" value="MSCL"/>
    <property type="match status" value="1"/>
</dbReference>
<reference key="1">
    <citation type="journal article" date="2006" name="Genome Biol.">
        <title>The genome of Rhizobium leguminosarum has recognizable core and accessory components.</title>
        <authorList>
            <person name="Young J.P.W."/>
            <person name="Crossman L.C."/>
            <person name="Johnston A.W.B."/>
            <person name="Thomson N.R."/>
            <person name="Ghazoui Z.F."/>
            <person name="Hull K.H."/>
            <person name="Wexler M."/>
            <person name="Curson A.R.J."/>
            <person name="Todd J.D."/>
            <person name="Poole P.S."/>
            <person name="Mauchline T.H."/>
            <person name="East A.K."/>
            <person name="Quail M.A."/>
            <person name="Churcher C."/>
            <person name="Arrowsmith C."/>
            <person name="Cherevach I."/>
            <person name="Chillingworth T."/>
            <person name="Clarke K."/>
            <person name="Cronin A."/>
            <person name="Davis P."/>
            <person name="Fraser A."/>
            <person name="Hance Z."/>
            <person name="Hauser H."/>
            <person name="Jagels K."/>
            <person name="Moule S."/>
            <person name="Mungall K."/>
            <person name="Norbertczak H."/>
            <person name="Rabbinowitsch E."/>
            <person name="Sanders M."/>
            <person name="Simmonds M."/>
            <person name="Whitehead S."/>
            <person name="Parkhill J."/>
        </authorList>
    </citation>
    <scope>NUCLEOTIDE SEQUENCE [LARGE SCALE GENOMIC DNA]</scope>
    <source>
        <strain>DSM 114642 / LMG 32736 / 3841</strain>
    </source>
</reference>
<gene>
    <name evidence="1" type="primary">mscL</name>
    <name type="ordered locus">RL0602</name>
</gene>
<feature type="chain" id="PRO_1000015415" description="Large-conductance mechanosensitive channel">
    <location>
        <begin position="1"/>
        <end position="145"/>
    </location>
</feature>
<feature type="transmembrane region" description="Helical" evidence="1">
    <location>
        <begin position="14"/>
        <end position="34"/>
    </location>
</feature>
<feature type="transmembrane region" description="Helical" evidence="1">
    <location>
        <begin position="38"/>
        <end position="58"/>
    </location>
</feature>
<feature type="transmembrane region" description="Helical" evidence="1">
    <location>
        <begin position="81"/>
        <end position="101"/>
    </location>
</feature>
<keyword id="KW-0997">Cell inner membrane</keyword>
<keyword id="KW-1003">Cell membrane</keyword>
<keyword id="KW-0407">Ion channel</keyword>
<keyword id="KW-0406">Ion transport</keyword>
<keyword id="KW-0472">Membrane</keyword>
<keyword id="KW-0812">Transmembrane</keyword>
<keyword id="KW-1133">Transmembrane helix</keyword>
<keyword id="KW-0813">Transport</keyword>
<accession>Q1MLQ8</accession>
<evidence type="ECO:0000255" key="1">
    <source>
        <dbReference type="HAMAP-Rule" id="MF_00115"/>
    </source>
</evidence>
<proteinExistence type="inferred from homology"/>
<sequence>MLNEFKAFIARGNVMDLAVGVIIGGAFGGIVKSLVDDLIMPIVGAIFGGFDFSNYFLPLSAAVNAQSLAAAREQGAVFAYGSFLTVLINFLILAWIIFLMVKGVNTMRAQIERQEKAAPEELPPPPADVQLLTEIRDLLARRPTA</sequence>
<organism>
    <name type="scientific">Rhizobium johnstonii (strain DSM 114642 / LMG 32736 / 3841)</name>
    <name type="common">Rhizobium leguminosarum bv. viciae</name>
    <dbReference type="NCBI Taxonomy" id="216596"/>
    <lineage>
        <taxon>Bacteria</taxon>
        <taxon>Pseudomonadati</taxon>
        <taxon>Pseudomonadota</taxon>
        <taxon>Alphaproteobacteria</taxon>
        <taxon>Hyphomicrobiales</taxon>
        <taxon>Rhizobiaceae</taxon>
        <taxon>Rhizobium/Agrobacterium group</taxon>
        <taxon>Rhizobium</taxon>
        <taxon>Rhizobium johnstonii</taxon>
    </lineage>
</organism>